<sequence length="206" mass="22971">MHDLIMSMAEVDISLDIGTKAVRLARAAASSYLRNEKLPDPPADPIFQEKHGVFTTINTYPGNTLRGCIGFPEPYYPLGEGIIRSSIYAATEDPRFEPMKIDEISHVTFEVSILTQPVEITVNPEDRPKAVHIGRDGLIAVYNGASGLLLPQVATEYRMNPEEFLEALCEKAGLWEGCWKYKKVKISKFQATVFGEKDPEGVVEKR</sequence>
<feature type="chain" id="PRO_0000142390" description="Protein Ta0236">
    <location>
        <begin position="1"/>
        <end position="206"/>
    </location>
</feature>
<feature type="domain" description="AMMECR1" evidence="1">
    <location>
        <begin position="16"/>
        <end position="205"/>
    </location>
</feature>
<name>Y236_THEAC</name>
<dbReference type="EMBL" id="AL445063">
    <property type="protein sequence ID" value="CAC11381.1"/>
    <property type="molecule type" value="Genomic_DNA"/>
</dbReference>
<dbReference type="SMR" id="Q9HLJ2"/>
<dbReference type="FunCoup" id="Q9HLJ2">
    <property type="interactions" value="26"/>
</dbReference>
<dbReference type="STRING" id="273075.gene:9571453"/>
<dbReference type="PaxDb" id="273075-Ta0236m"/>
<dbReference type="EnsemblBacteria" id="CAC11381">
    <property type="protein sequence ID" value="CAC11381"/>
    <property type="gene ID" value="CAC11381"/>
</dbReference>
<dbReference type="KEGG" id="tac:Ta0236"/>
<dbReference type="eggNOG" id="arCOG01336">
    <property type="taxonomic scope" value="Archaea"/>
</dbReference>
<dbReference type="HOGENOM" id="CLU_095686_1_1_2"/>
<dbReference type="InParanoid" id="Q9HLJ2"/>
<dbReference type="Proteomes" id="UP000001024">
    <property type="component" value="Chromosome"/>
</dbReference>
<dbReference type="Gene3D" id="3.30.700.20">
    <property type="entry name" value="Hypothetical protein ph0010, domain 1"/>
    <property type="match status" value="1"/>
</dbReference>
<dbReference type="Gene3D" id="3.30.1490.150">
    <property type="entry name" value="Hypothetical protein ph0010, domain 2"/>
    <property type="match status" value="1"/>
</dbReference>
<dbReference type="HAMAP" id="MF_00645">
    <property type="entry name" value="AMMECR1"/>
    <property type="match status" value="1"/>
</dbReference>
<dbReference type="InterPro" id="IPR023473">
    <property type="entry name" value="AMMECR1"/>
</dbReference>
<dbReference type="InterPro" id="IPR036071">
    <property type="entry name" value="AMMECR1_dom_sf"/>
</dbReference>
<dbReference type="InterPro" id="IPR002733">
    <property type="entry name" value="AMMECR1_domain"/>
</dbReference>
<dbReference type="InterPro" id="IPR027485">
    <property type="entry name" value="AMMECR1_N"/>
</dbReference>
<dbReference type="InterPro" id="IPR027623">
    <property type="entry name" value="AmmeMemoSam_A"/>
</dbReference>
<dbReference type="InterPro" id="IPR023472">
    <property type="entry name" value="Uncharacterised_MJ0810"/>
</dbReference>
<dbReference type="NCBIfam" id="TIGR04335">
    <property type="entry name" value="AmmeMemoSam_A"/>
    <property type="match status" value="1"/>
</dbReference>
<dbReference type="NCBIfam" id="TIGR00296">
    <property type="entry name" value="TIGR00296 family protein"/>
    <property type="match status" value="1"/>
</dbReference>
<dbReference type="PANTHER" id="PTHR13016:SF0">
    <property type="entry name" value="AMME SYNDROME CANDIDATE GENE 1 PROTEIN"/>
    <property type="match status" value="1"/>
</dbReference>
<dbReference type="PANTHER" id="PTHR13016">
    <property type="entry name" value="AMMECR1 HOMOLOG"/>
    <property type="match status" value="1"/>
</dbReference>
<dbReference type="Pfam" id="PF01871">
    <property type="entry name" value="AMMECR1"/>
    <property type="match status" value="1"/>
</dbReference>
<dbReference type="SUPFAM" id="SSF143447">
    <property type="entry name" value="AMMECR1-like"/>
    <property type="match status" value="1"/>
</dbReference>
<dbReference type="PROSITE" id="PS51112">
    <property type="entry name" value="AMMECR1"/>
    <property type="match status" value="1"/>
</dbReference>
<reference key="1">
    <citation type="journal article" date="2000" name="Nature">
        <title>The genome sequence of the thermoacidophilic scavenger Thermoplasma acidophilum.</title>
        <authorList>
            <person name="Ruepp A."/>
            <person name="Graml W."/>
            <person name="Santos-Martinez M.-L."/>
            <person name="Koretke K.K."/>
            <person name="Volker C."/>
            <person name="Mewes H.-W."/>
            <person name="Frishman D."/>
            <person name="Stocker S."/>
            <person name="Lupas A.N."/>
            <person name="Baumeister W."/>
        </authorList>
    </citation>
    <scope>NUCLEOTIDE SEQUENCE [LARGE SCALE GENOMIC DNA]</scope>
    <source>
        <strain>ATCC 25905 / DSM 1728 / JCM 9062 / NBRC 15155 / AMRC-C165</strain>
    </source>
</reference>
<accession>Q9HLJ2</accession>
<proteinExistence type="inferred from homology"/>
<evidence type="ECO:0000255" key="1">
    <source>
        <dbReference type="HAMAP-Rule" id="MF_00645"/>
    </source>
</evidence>
<keyword id="KW-1185">Reference proteome</keyword>
<protein>
    <recommendedName>
        <fullName evidence="1">Protein Ta0236</fullName>
    </recommendedName>
</protein>
<organism>
    <name type="scientific">Thermoplasma acidophilum (strain ATCC 25905 / DSM 1728 / JCM 9062 / NBRC 15155 / AMRC-C165)</name>
    <dbReference type="NCBI Taxonomy" id="273075"/>
    <lineage>
        <taxon>Archaea</taxon>
        <taxon>Methanobacteriati</taxon>
        <taxon>Thermoplasmatota</taxon>
        <taxon>Thermoplasmata</taxon>
        <taxon>Thermoplasmatales</taxon>
        <taxon>Thermoplasmataceae</taxon>
        <taxon>Thermoplasma</taxon>
    </lineage>
</organism>
<gene>
    <name type="ordered locus">Ta0236</name>
</gene>